<dbReference type="EC" id="3.1.1.106" evidence="1"/>
<dbReference type="EMBL" id="CP002206">
    <property type="protein sequence ID" value="ADO09530.1"/>
    <property type="molecule type" value="Genomic_DNA"/>
</dbReference>
<dbReference type="RefSeq" id="WP_013357869.1">
    <property type="nucleotide sequence ID" value="NC_014562.1"/>
</dbReference>
<dbReference type="SMR" id="E1SDF1"/>
<dbReference type="KEGG" id="pva:Pvag_1340"/>
<dbReference type="eggNOG" id="COG2110">
    <property type="taxonomic scope" value="Bacteria"/>
</dbReference>
<dbReference type="HOGENOM" id="CLU_046550_5_1_6"/>
<dbReference type="OrthoDB" id="6194521at2"/>
<dbReference type="GO" id="GO:0061463">
    <property type="term" value="F:O-acetyl-ADP-ribose deacetylase activity"/>
    <property type="evidence" value="ECO:0007669"/>
    <property type="project" value="UniProtKB-EC"/>
</dbReference>
<dbReference type="GO" id="GO:0001883">
    <property type="term" value="F:purine nucleoside binding"/>
    <property type="evidence" value="ECO:0007669"/>
    <property type="project" value="UniProtKB-UniRule"/>
</dbReference>
<dbReference type="GO" id="GO:0008428">
    <property type="term" value="F:ribonuclease inhibitor activity"/>
    <property type="evidence" value="ECO:0007669"/>
    <property type="project" value="UniProtKB-UniRule"/>
</dbReference>
<dbReference type="GO" id="GO:0042278">
    <property type="term" value="P:purine nucleoside metabolic process"/>
    <property type="evidence" value="ECO:0007669"/>
    <property type="project" value="UniProtKB-UniRule"/>
</dbReference>
<dbReference type="CDD" id="cd02908">
    <property type="entry name" value="Macro_OAADPr_deacetylase"/>
    <property type="match status" value="1"/>
</dbReference>
<dbReference type="Gene3D" id="3.40.220.10">
    <property type="entry name" value="Leucine Aminopeptidase, subunit E, domain 1"/>
    <property type="match status" value="1"/>
</dbReference>
<dbReference type="HAMAP" id="MF_01205">
    <property type="entry name" value="YmdB"/>
    <property type="match status" value="1"/>
</dbReference>
<dbReference type="InterPro" id="IPR002589">
    <property type="entry name" value="Macro_dom"/>
</dbReference>
<dbReference type="InterPro" id="IPR043472">
    <property type="entry name" value="Macro_dom-like"/>
</dbReference>
<dbReference type="InterPro" id="IPR024900">
    <property type="entry name" value="O-Ac-ADP-ribose_deAcase"/>
</dbReference>
<dbReference type="NCBIfam" id="NF001664">
    <property type="entry name" value="PRK00431.1-6"/>
    <property type="match status" value="1"/>
</dbReference>
<dbReference type="PANTHER" id="PTHR11106">
    <property type="entry name" value="GANGLIOSIDE INDUCED DIFFERENTIATION ASSOCIATED PROTEIN 2-RELATED"/>
    <property type="match status" value="1"/>
</dbReference>
<dbReference type="PANTHER" id="PTHR11106:SF27">
    <property type="entry name" value="MACRO DOMAIN-CONTAINING PROTEIN"/>
    <property type="match status" value="1"/>
</dbReference>
<dbReference type="Pfam" id="PF01661">
    <property type="entry name" value="Macro"/>
    <property type="match status" value="1"/>
</dbReference>
<dbReference type="SMART" id="SM00506">
    <property type="entry name" value="A1pp"/>
    <property type="match status" value="1"/>
</dbReference>
<dbReference type="SUPFAM" id="SSF52949">
    <property type="entry name" value="Macro domain-like"/>
    <property type="match status" value="1"/>
</dbReference>
<dbReference type="PROSITE" id="PS51154">
    <property type="entry name" value="MACRO"/>
    <property type="match status" value="1"/>
</dbReference>
<accession>E1SDF1</accession>
<keyword id="KW-0378">Hydrolase</keyword>
<organism>
    <name type="scientific">Pantoea vagans (strain C9-1)</name>
    <name type="common">Pantoea agglomerans (strain C9-1)</name>
    <dbReference type="NCBI Taxonomy" id="712898"/>
    <lineage>
        <taxon>Bacteria</taxon>
        <taxon>Pseudomonadati</taxon>
        <taxon>Pseudomonadota</taxon>
        <taxon>Gammaproteobacteria</taxon>
        <taxon>Enterobacterales</taxon>
        <taxon>Erwiniaceae</taxon>
        <taxon>Pantoea</taxon>
    </lineage>
</organism>
<protein>
    <recommendedName>
        <fullName evidence="1">O-acetyl-ADP-ribose deacetylase 1</fullName>
        <ecNumber evidence="1">3.1.1.106</ecNumber>
    </recommendedName>
    <alternativeName>
        <fullName evidence="1">Regulator of RNase III activity 1</fullName>
    </alternativeName>
</protein>
<name>YMDB1_PANVC</name>
<sequence length="171" mass="18381">MKKITVIQGDITKVSAEAIVNAANSSLLGGGGVDGAIHRAGGPVILAECQLIRNRQGGCKVGDAVITGAGNLPADYVIHTVGPRWSDGRHDEDALLKRAYQSCFKLVDYHGIKTVSFPNISTGIYGFPKERAATIALDVIKHCIAENRTLENVNLVCFDAENYDLYLKLLN</sequence>
<gene>
    <name evidence="1" type="primary">ymdB1</name>
    <name type="ordered locus">Pvag_1340</name>
</gene>
<comment type="function">
    <text evidence="1">Deacetylates O-acetyl-ADP ribose to yield ADP-ribose and free acetate. Down-regulates ribonuclease 3 (RNase III) activity. Acts by interacting directly with the region of the ribonuclease that is required for dimerization/activation.</text>
</comment>
<comment type="catalytic activity">
    <reaction evidence="1">
        <text>3''-O-acetyl-ADP-D-ribose + H2O = ADP-D-ribose + acetate + H(+)</text>
        <dbReference type="Rhea" id="RHEA:59244"/>
        <dbReference type="ChEBI" id="CHEBI:15377"/>
        <dbReference type="ChEBI" id="CHEBI:15378"/>
        <dbReference type="ChEBI" id="CHEBI:30089"/>
        <dbReference type="ChEBI" id="CHEBI:57967"/>
        <dbReference type="ChEBI" id="CHEBI:142723"/>
        <dbReference type="EC" id="3.1.1.106"/>
    </reaction>
</comment>
<comment type="catalytic activity">
    <reaction evidence="1">
        <text>2''-O-acetyl-ADP-D-ribose + H2O = ADP-D-ribose + acetate + H(+)</text>
        <dbReference type="Rhea" id="RHEA:57060"/>
        <dbReference type="ChEBI" id="CHEBI:15377"/>
        <dbReference type="ChEBI" id="CHEBI:15378"/>
        <dbReference type="ChEBI" id="CHEBI:30089"/>
        <dbReference type="ChEBI" id="CHEBI:57967"/>
        <dbReference type="ChEBI" id="CHEBI:83767"/>
        <dbReference type="EC" id="3.1.1.106"/>
    </reaction>
</comment>
<comment type="subunit">
    <text evidence="1">Homodimer. Interacts with RNase III.</text>
</comment>
<comment type="similarity">
    <text evidence="1">Belongs to the MacroD-type family. YmdB subfamily.</text>
</comment>
<feature type="chain" id="PRO_0000409481" description="O-acetyl-ADP-ribose deacetylase 1">
    <location>
        <begin position="1"/>
        <end position="171"/>
    </location>
</feature>
<feature type="domain" description="Macro" evidence="1">
    <location>
        <begin position="1"/>
        <end position="171"/>
    </location>
</feature>
<feature type="active site" description="Proton acceptor" evidence="1">
    <location>
        <position position="34"/>
    </location>
</feature>
<feature type="binding site" evidence="1">
    <location>
        <begin position="10"/>
        <end position="11"/>
    </location>
    <ligand>
        <name>substrate</name>
    </ligand>
</feature>
<feature type="binding site" evidence="1">
    <location>
        <position position="24"/>
    </location>
    <ligand>
        <name>substrate</name>
    </ligand>
</feature>
<feature type="binding site" evidence="1">
    <location>
        <begin position="32"/>
        <end position="34"/>
    </location>
    <ligand>
        <name>substrate</name>
    </ligand>
</feature>
<feature type="binding site" evidence="1">
    <location>
        <begin position="121"/>
        <end position="125"/>
    </location>
    <ligand>
        <name>substrate</name>
    </ligand>
</feature>
<reference key="1">
    <citation type="journal article" date="2010" name="J. Bacteriol.">
        <title>The genome sequence of the biocontrol agent Pantoea vagans strain C9-1.</title>
        <authorList>
            <person name="Smits T.H."/>
            <person name="Rezzonico F."/>
            <person name="Kamber T."/>
            <person name="Goesmann A."/>
            <person name="Ishimaru C.A."/>
            <person name="Stockwell V.O."/>
            <person name="Frey J.E."/>
            <person name="Duffy B."/>
        </authorList>
    </citation>
    <scope>NUCLEOTIDE SEQUENCE [LARGE SCALE GENOMIC DNA]</scope>
    <source>
        <strain>C9-1</strain>
    </source>
</reference>
<proteinExistence type="inferred from homology"/>
<evidence type="ECO:0000255" key="1">
    <source>
        <dbReference type="HAMAP-Rule" id="MF_01205"/>
    </source>
</evidence>